<evidence type="ECO:0000255" key="1">
    <source>
        <dbReference type="HAMAP-Rule" id="MF_00489"/>
    </source>
</evidence>
<name>Y2673_MARSD</name>
<proteinExistence type="inferred from homology"/>
<keyword id="KW-1185">Reference proteome</keyword>
<reference key="1">
    <citation type="submission" date="2009-06" db="EMBL/GenBank/DDBJ databases">
        <title>Complete sequence of Desulfovibrio salexigens DSM 2638.</title>
        <authorList>
            <consortium name="US DOE Joint Genome Institute"/>
            <person name="Lucas S."/>
            <person name="Copeland A."/>
            <person name="Lapidus A."/>
            <person name="Glavina del Rio T."/>
            <person name="Tice H."/>
            <person name="Bruce D."/>
            <person name="Goodwin L."/>
            <person name="Pitluck S."/>
            <person name="Munk A.C."/>
            <person name="Brettin T."/>
            <person name="Detter J.C."/>
            <person name="Han C."/>
            <person name="Tapia R."/>
            <person name="Larimer F."/>
            <person name="Land M."/>
            <person name="Hauser L."/>
            <person name="Kyrpides N."/>
            <person name="Anderson I."/>
            <person name="Wall J.D."/>
            <person name="Arkin A.P."/>
            <person name="Dehal P."/>
            <person name="Chivian D."/>
            <person name="Giles B."/>
            <person name="Hazen T.C."/>
        </authorList>
    </citation>
    <scope>NUCLEOTIDE SEQUENCE [LARGE SCALE GENOMIC DNA]</scope>
    <source>
        <strain>ATCC 14822 / DSM 2638 / NCIMB 8403 / VKM B-1763</strain>
    </source>
</reference>
<organism>
    <name type="scientific">Maridesulfovibrio salexigens (strain ATCC 14822 / DSM 2638 / NCIMB 8403 / VKM B-1763)</name>
    <name type="common">Desulfovibrio salexigens</name>
    <dbReference type="NCBI Taxonomy" id="526222"/>
    <lineage>
        <taxon>Bacteria</taxon>
        <taxon>Pseudomonadati</taxon>
        <taxon>Thermodesulfobacteriota</taxon>
        <taxon>Desulfovibrionia</taxon>
        <taxon>Desulfovibrionales</taxon>
        <taxon>Desulfovibrionaceae</taxon>
        <taxon>Maridesulfovibrio</taxon>
    </lineage>
</organism>
<sequence>MQIWVDADACPKAVKEILFKTAMRREVKLTLVANQYMNIPTSPFIDTIKVGAGFDVADNEIVKLCNAGDLVITADIPLADKIVEKGATGLNPRGELYTEDNIKGILSMRNLMEELRSAGTVSGGPAAFSPKDKQNFTNQLDKFLTRSLNRI</sequence>
<dbReference type="EMBL" id="CP001649">
    <property type="protein sequence ID" value="ACS80727.1"/>
    <property type="molecule type" value="Genomic_DNA"/>
</dbReference>
<dbReference type="RefSeq" id="WP_015852543.1">
    <property type="nucleotide sequence ID" value="NC_012881.1"/>
</dbReference>
<dbReference type="STRING" id="526222.Desal_2673"/>
<dbReference type="KEGG" id="dsa:Desal_2673"/>
<dbReference type="eggNOG" id="COG1671">
    <property type="taxonomic scope" value="Bacteria"/>
</dbReference>
<dbReference type="HOGENOM" id="CLU_106619_2_1_7"/>
<dbReference type="OrthoDB" id="9798918at2"/>
<dbReference type="Proteomes" id="UP000002601">
    <property type="component" value="Chromosome"/>
</dbReference>
<dbReference type="CDD" id="cd18720">
    <property type="entry name" value="PIN_YqxD-like"/>
    <property type="match status" value="1"/>
</dbReference>
<dbReference type="HAMAP" id="MF_00489">
    <property type="entry name" value="UPF0178"/>
    <property type="match status" value="1"/>
</dbReference>
<dbReference type="InterPro" id="IPR003791">
    <property type="entry name" value="UPF0178"/>
</dbReference>
<dbReference type="NCBIfam" id="NF001095">
    <property type="entry name" value="PRK00124.1"/>
    <property type="match status" value="1"/>
</dbReference>
<dbReference type="PANTHER" id="PTHR35146">
    <property type="entry name" value="UPF0178 PROTEIN YAII"/>
    <property type="match status" value="1"/>
</dbReference>
<dbReference type="PANTHER" id="PTHR35146:SF1">
    <property type="entry name" value="UPF0178 PROTEIN YAII"/>
    <property type="match status" value="1"/>
</dbReference>
<dbReference type="Pfam" id="PF02639">
    <property type="entry name" value="DUF188"/>
    <property type="match status" value="1"/>
</dbReference>
<gene>
    <name type="ordered locus">Desal_2673</name>
</gene>
<comment type="similarity">
    <text evidence="1">Belongs to the UPF0178 family.</text>
</comment>
<protein>
    <recommendedName>
        <fullName evidence="1">UPF0178 protein Desal_2673</fullName>
    </recommendedName>
</protein>
<accession>C6BYX0</accession>
<feature type="chain" id="PRO_1000206452" description="UPF0178 protein Desal_2673">
    <location>
        <begin position="1"/>
        <end position="151"/>
    </location>
</feature>